<accession>Q87LM3</accession>
<comment type="similarity">
    <text evidence="1">Belongs to the UPF0149 family.</text>
</comment>
<comment type="sequence caution" evidence="2">
    <conflict type="erroneous initiation">
        <sequence resource="EMBL-CDS" id="BAC60851"/>
    </conflict>
</comment>
<reference key="1">
    <citation type="journal article" date="2003" name="Lancet">
        <title>Genome sequence of Vibrio parahaemolyticus: a pathogenic mechanism distinct from that of V. cholerae.</title>
        <authorList>
            <person name="Makino K."/>
            <person name="Oshima K."/>
            <person name="Kurokawa K."/>
            <person name="Yokoyama K."/>
            <person name="Uda T."/>
            <person name="Tagomori K."/>
            <person name="Iijima Y."/>
            <person name="Najima M."/>
            <person name="Nakano M."/>
            <person name="Yamashita A."/>
            <person name="Kubota Y."/>
            <person name="Kimura S."/>
            <person name="Yasunaga T."/>
            <person name="Honda T."/>
            <person name="Shinagawa H."/>
            <person name="Hattori M."/>
            <person name="Iida T."/>
        </authorList>
    </citation>
    <scope>NUCLEOTIDE SEQUENCE [LARGE SCALE GENOMIC DNA]</scope>
    <source>
        <strain>RIMD 2210633</strain>
    </source>
</reference>
<gene>
    <name type="ordered locus">VP2588</name>
</gene>
<evidence type="ECO:0000255" key="1">
    <source>
        <dbReference type="HAMAP-Rule" id="MF_00346"/>
    </source>
</evidence>
<evidence type="ECO:0000305" key="2"/>
<proteinExistence type="inferred from homology"/>
<sequence>MSEITLPEYQSIAAELQSASLAVTPAELHGLLVGMLSGGLAINDQTWQPILFDYTNDGMGWPTTALAFAQTVFKVTANELTGSSMELSLLLPDESGEEGLFALADSLSDFVNHFISGLGLAGIALNNASDDAKEALADLEEIAKLGIDEDDDFGEQAQLLEQVIEHVKACVLTIHAEFGARPESSESKPTIH</sequence>
<feature type="chain" id="PRO_0000207571" description="UPF0149 protein VP2588">
    <location>
        <begin position="1"/>
        <end position="192"/>
    </location>
</feature>
<protein>
    <recommendedName>
        <fullName evidence="1">UPF0149 protein VP2588</fullName>
    </recommendedName>
</protein>
<organism>
    <name type="scientific">Vibrio parahaemolyticus serotype O3:K6 (strain RIMD 2210633)</name>
    <dbReference type="NCBI Taxonomy" id="223926"/>
    <lineage>
        <taxon>Bacteria</taxon>
        <taxon>Pseudomonadati</taxon>
        <taxon>Pseudomonadota</taxon>
        <taxon>Gammaproteobacteria</taxon>
        <taxon>Vibrionales</taxon>
        <taxon>Vibrionaceae</taxon>
        <taxon>Vibrio</taxon>
    </lineage>
</organism>
<dbReference type="EMBL" id="BA000031">
    <property type="protein sequence ID" value="BAC60851.1"/>
    <property type="status" value="ALT_INIT"/>
    <property type="molecule type" value="Genomic_DNA"/>
</dbReference>
<dbReference type="RefSeq" id="NP_798967.2">
    <property type="nucleotide sequence ID" value="NC_004603.1"/>
</dbReference>
<dbReference type="RefSeq" id="WP_005457285.1">
    <property type="nucleotide sequence ID" value="NC_004603.1"/>
</dbReference>
<dbReference type="SMR" id="Q87LM3"/>
<dbReference type="GeneID" id="1190112"/>
<dbReference type="KEGG" id="vpa:VP2588"/>
<dbReference type="PATRIC" id="fig|223926.6.peg.2485"/>
<dbReference type="eggNOG" id="COG3079">
    <property type="taxonomic scope" value="Bacteria"/>
</dbReference>
<dbReference type="HOGENOM" id="CLU_085336_1_0_6"/>
<dbReference type="Proteomes" id="UP000002493">
    <property type="component" value="Chromosome 1"/>
</dbReference>
<dbReference type="GO" id="GO:0005829">
    <property type="term" value="C:cytosol"/>
    <property type="evidence" value="ECO:0007669"/>
    <property type="project" value="TreeGrafter"/>
</dbReference>
<dbReference type="Gene3D" id="1.20.120.740">
    <property type="entry name" value="YgfB uncharacterised protein family UPF0149, PF03695"/>
    <property type="match status" value="1"/>
</dbReference>
<dbReference type="HAMAP" id="MF_00346">
    <property type="entry name" value="UPF0149"/>
    <property type="match status" value="1"/>
</dbReference>
<dbReference type="InterPro" id="IPR011978">
    <property type="entry name" value="YgfB-like"/>
</dbReference>
<dbReference type="InterPro" id="IPR036255">
    <property type="entry name" value="YgfB-like_sf"/>
</dbReference>
<dbReference type="NCBIfam" id="NF002477">
    <property type="entry name" value="PRK01736.1"/>
    <property type="match status" value="1"/>
</dbReference>
<dbReference type="PANTHER" id="PTHR37528">
    <property type="entry name" value="UPF0149 PROTEIN YGFB"/>
    <property type="match status" value="1"/>
</dbReference>
<dbReference type="PANTHER" id="PTHR37528:SF1">
    <property type="entry name" value="UPF0149 PROTEIN YGFB"/>
    <property type="match status" value="1"/>
</dbReference>
<dbReference type="Pfam" id="PF03695">
    <property type="entry name" value="UPF0149"/>
    <property type="match status" value="1"/>
</dbReference>
<dbReference type="SUPFAM" id="SSF101327">
    <property type="entry name" value="YgfB-like"/>
    <property type="match status" value="1"/>
</dbReference>
<name>Y2588_VIBPA</name>